<dbReference type="EMBL" id="AAFI02000008">
    <property type="protein sequence ID" value="EAL71227.1"/>
    <property type="molecule type" value="Genomic_DNA"/>
</dbReference>
<dbReference type="RefSeq" id="XP_645258.1">
    <property type="nucleotide sequence ID" value="XM_640166.1"/>
</dbReference>
<dbReference type="SMR" id="Q75JT4"/>
<dbReference type="FunCoup" id="Q75JT4">
    <property type="interactions" value="10"/>
</dbReference>
<dbReference type="STRING" id="44689.Q75JT4"/>
<dbReference type="GlyCosmos" id="Q75JT4">
    <property type="glycosylation" value="6 sites, No reported glycans"/>
</dbReference>
<dbReference type="GlyGen" id="Q75JT4">
    <property type="glycosylation" value="6 sites"/>
</dbReference>
<dbReference type="PaxDb" id="44689-DDB0231983"/>
<dbReference type="EnsemblProtists" id="EAL71227">
    <property type="protein sequence ID" value="EAL71227"/>
    <property type="gene ID" value="DDB_G0272150"/>
</dbReference>
<dbReference type="GeneID" id="8618425"/>
<dbReference type="KEGG" id="ddi:DDB_G0272150"/>
<dbReference type="dictyBase" id="DDB_G0272150">
    <property type="gene designation" value="grlJ"/>
</dbReference>
<dbReference type="VEuPathDB" id="AmoebaDB:DDB_G0272150"/>
<dbReference type="eggNOG" id="KOG1055">
    <property type="taxonomic scope" value="Eukaryota"/>
</dbReference>
<dbReference type="HOGENOM" id="CLU_365408_0_0_1"/>
<dbReference type="InParanoid" id="Q75JT4"/>
<dbReference type="OMA" id="WININKL"/>
<dbReference type="PhylomeDB" id="Q75JT4"/>
<dbReference type="PRO" id="PR:Q75JT4"/>
<dbReference type="Proteomes" id="UP000002195">
    <property type="component" value="Chromosome 2"/>
</dbReference>
<dbReference type="GO" id="GO:0005789">
    <property type="term" value="C:endoplasmic reticulum membrane"/>
    <property type="evidence" value="ECO:0007669"/>
    <property type="project" value="UniProtKB-SubCell"/>
</dbReference>
<dbReference type="GO" id="GO:0000139">
    <property type="term" value="C:Golgi membrane"/>
    <property type="evidence" value="ECO:0007669"/>
    <property type="project" value="UniProtKB-SubCell"/>
</dbReference>
<dbReference type="GO" id="GO:0005635">
    <property type="term" value="C:nuclear envelope"/>
    <property type="evidence" value="ECO:0007669"/>
    <property type="project" value="UniProtKB-SubCell"/>
</dbReference>
<dbReference type="GO" id="GO:0031090">
    <property type="term" value="C:organelle membrane"/>
    <property type="evidence" value="ECO:0000314"/>
    <property type="project" value="dictyBase"/>
</dbReference>
<dbReference type="GO" id="GO:0005886">
    <property type="term" value="C:plasma membrane"/>
    <property type="evidence" value="ECO:0000314"/>
    <property type="project" value="dictyBase"/>
</dbReference>
<dbReference type="GO" id="GO:0004930">
    <property type="term" value="F:G protein-coupled receptor activity"/>
    <property type="evidence" value="ECO:0000318"/>
    <property type="project" value="GO_Central"/>
</dbReference>
<dbReference type="GO" id="GO:0007186">
    <property type="term" value="P:G protein-coupled receptor signaling pathway"/>
    <property type="evidence" value="ECO:0000318"/>
    <property type="project" value="GO_Central"/>
</dbReference>
<dbReference type="GO" id="GO:1902610">
    <property type="term" value="P:response to N-phenylthiourea"/>
    <property type="evidence" value="ECO:0000315"/>
    <property type="project" value="dictyBase"/>
</dbReference>
<dbReference type="GO" id="GO:0031153">
    <property type="term" value="P:slug development involved in sorocarp development"/>
    <property type="evidence" value="ECO:0000315"/>
    <property type="project" value="dictyBase"/>
</dbReference>
<dbReference type="GO" id="GO:0030587">
    <property type="term" value="P:sorocarp development"/>
    <property type="evidence" value="ECO:0000315"/>
    <property type="project" value="dictyBase"/>
</dbReference>
<dbReference type="GO" id="GO:0030435">
    <property type="term" value="P:sporulation resulting in formation of a cellular spore"/>
    <property type="evidence" value="ECO:0000315"/>
    <property type="project" value="dictyBase"/>
</dbReference>
<dbReference type="CDD" id="cd15047">
    <property type="entry name" value="7tmC_GABA-B-like"/>
    <property type="match status" value="1"/>
</dbReference>
<dbReference type="FunFam" id="3.40.50.2300:FF:000516">
    <property type="entry name" value="Metabotropic glutamate receptor-like protein A"/>
    <property type="match status" value="1"/>
</dbReference>
<dbReference type="FunFam" id="3.40.50.2300:FF:000581">
    <property type="entry name" value="Metabotropic glutamate receptor-like protein D"/>
    <property type="match status" value="1"/>
</dbReference>
<dbReference type="Gene3D" id="3.40.50.2300">
    <property type="match status" value="2"/>
</dbReference>
<dbReference type="InterPro" id="IPR017978">
    <property type="entry name" value="GPCR_3_C"/>
</dbReference>
<dbReference type="InterPro" id="IPR051530">
    <property type="entry name" value="mGluR/GABA-B-like"/>
</dbReference>
<dbReference type="InterPro" id="IPR003760">
    <property type="entry name" value="PnrA-like"/>
</dbReference>
<dbReference type="PANTHER" id="PTHR46924:SF2">
    <property type="entry name" value="METABOTROPIC GLUTAMATE RECEPTOR-LIKE PROTEIN A-RELATED"/>
    <property type="match status" value="1"/>
</dbReference>
<dbReference type="PANTHER" id="PTHR46924">
    <property type="entry name" value="METABOTROPIC GLUTAMATE RECEPTOR-LIKE PROTEIN C-RELATED-RELATED"/>
    <property type="match status" value="1"/>
</dbReference>
<dbReference type="Pfam" id="PF00003">
    <property type="entry name" value="7tm_3"/>
    <property type="match status" value="1"/>
</dbReference>
<dbReference type="Pfam" id="PF02608">
    <property type="entry name" value="Bmp"/>
    <property type="match status" value="1"/>
</dbReference>
<dbReference type="PRINTS" id="PR01176">
    <property type="entry name" value="GABABRECEPTR"/>
</dbReference>
<dbReference type="PROSITE" id="PS50259">
    <property type="entry name" value="G_PROTEIN_RECEP_F3_4"/>
    <property type="match status" value="1"/>
</dbReference>
<feature type="signal peptide" evidence="1">
    <location>
        <begin position="1"/>
        <end position="20"/>
    </location>
</feature>
<feature type="chain" id="PRO_0000370353" description="Metabotropic glutamate receptor-like protein J">
    <location>
        <begin position="21"/>
        <end position="783"/>
    </location>
</feature>
<feature type="topological domain" description="Extracellular" evidence="1">
    <location>
        <begin position="21"/>
        <end position="383"/>
    </location>
</feature>
<feature type="transmembrane region" description="Helical; Name=1" evidence="1">
    <location>
        <begin position="384"/>
        <end position="404"/>
    </location>
</feature>
<feature type="topological domain" description="Cytoplasmic" evidence="1">
    <location>
        <begin position="405"/>
        <end position="415"/>
    </location>
</feature>
<feature type="transmembrane region" description="Helical; Name=2" evidence="1">
    <location>
        <begin position="416"/>
        <end position="436"/>
    </location>
</feature>
<feature type="topological domain" description="Extracellular" evidence="1">
    <location>
        <begin position="437"/>
        <end position="443"/>
    </location>
</feature>
<feature type="transmembrane region" description="Helical; Name=3" evidence="1">
    <location>
        <begin position="444"/>
        <end position="464"/>
    </location>
</feature>
<feature type="topological domain" description="Cytoplasmic" evidence="1">
    <location>
        <begin position="465"/>
        <end position="489"/>
    </location>
</feature>
<feature type="transmembrane region" description="Helical; Name=4" evidence="1">
    <location>
        <begin position="490"/>
        <end position="510"/>
    </location>
</feature>
<feature type="topological domain" description="Extracellular" evidence="1">
    <location>
        <begin position="511"/>
        <end position="538"/>
    </location>
</feature>
<feature type="transmembrane region" description="Helical; Name=5" evidence="1">
    <location>
        <begin position="539"/>
        <end position="559"/>
    </location>
</feature>
<feature type="topological domain" description="Cytoplasmic" evidence="1">
    <location>
        <begin position="560"/>
        <end position="575"/>
    </location>
</feature>
<feature type="transmembrane region" description="Helical; Name=6" evidence="1">
    <location>
        <begin position="576"/>
        <end position="596"/>
    </location>
</feature>
<feature type="topological domain" description="Extracellular" evidence="1">
    <location>
        <begin position="597"/>
        <end position="604"/>
    </location>
</feature>
<feature type="transmembrane region" description="Helical; Name=7" evidence="1">
    <location>
        <begin position="605"/>
        <end position="625"/>
    </location>
</feature>
<feature type="topological domain" description="Cytoplasmic" evidence="1">
    <location>
        <begin position="626"/>
        <end position="783"/>
    </location>
</feature>
<feature type="region of interest" description="Disordered" evidence="2">
    <location>
        <begin position="647"/>
        <end position="696"/>
    </location>
</feature>
<feature type="region of interest" description="Disordered" evidence="2">
    <location>
        <begin position="731"/>
        <end position="783"/>
    </location>
</feature>
<feature type="coiled-coil region" evidence="1">
    <location>
        <begin position="56"/>
        <end position="85"/>
    </location>
</feature>
<feature type="compositionally biased region" description="Low complexity" evidence="2">
    <location>
        <begin position="647"/>
        <end position="656"/>
    </location>
</feature>
<feature type="compositionally biased region" description="Acidic residues" evidence="2">
    <location>
        <begin position="670"/>
        <end position="679"/>
    </location>
</feature>
<feature type="compositionally biased region" description="Polar residues" evidence="2">
    <location>
        <begin position="763"/>
        <end position="783"/>
    </location>
</feature>
<feature type="glycosylation site" description="N-linked (GlcNAc...) asparagine" evidence="1">
    <location>
        <position position="181"/>
    </location>
</feature>
<feature type="glycosylation site" description="N-linked (GlcNAc...) asparagine" evidence="1">
    <location>
        <position position="196"/>
    </location>
</feature>
<feature type="glycosylation site" description="N-linked (GlcNAc...) asparagine" evidence="1">
    <location>
        <position position="256"/>
    </location>
</feature>
<feature type="glycosylation site" description="N-linked (GlcNAc...) asparagine" evidence="1">
    <location>
        <position position="282"/>
    </location>
</feature>
<feature type="glycosylation site" description="N-linked (GlcNAc...) asparagine" evidence="1">
    <location>
        <position position="315"/>
    </location>
</feature>
<feature type="glycosylation site" description="N-linked (GlcNAc...) asparagine" evidence="1">
    <location>
        <position position="441"/>
    </location>
</feature>
<organism>
    <name type="scientific">Dictyostelium discoideum</name>
    <name type="common">Social amoeba</name>
    <dbReference type="NCBI Taxonomy" id="44689"/>
    <lineage>
        <taxon>Eukaryota</taxon>
        <taxon>Amoebozoa</taxon>
        <taxon>Evosea</taxon>
        <taxon>Eumycetozoa</taxon>
        <taxon>Dictyostelia</taxon>
        <taxon>Dictyosteliales</taxon>
        <taxon>Dictyosteliaceae</taxon>
        <taxon>Dictyostelium</taxon>
    </lineage>
</organism>
<comment type="function">
    <text evidence="3">May act during the development and be a negative regulator.</text>
</comment>
<comment type="subcellular location">
    <subcellularLocation>
        <location evidence="3">Cell membrane</location>
    </subcellularLocation>
    <subcellularLocation>
        <location evidence="3">Membrane</location>
        <topology evidence="3">Multi-pass membrane protein</topology>
    </subcellularLocation>
    <subcellularLocation>
        <location evidence="3">Endoplasmic reticulum membrane</location>
    </subcellularLocation>
    <subcellularLocation>
        <location evidence="3">Golgi apparatus membrane</location>
    </subcellularLocation>
    <subcellularLocation>
        <location evidence="3">Nucleus envelope</location>
    </subcellularLocation>
    <text>May also localize to internal membranes.</text>
</comment>
<comment type="developmental stage">
    <text evidence="3">Expressed throughout growth and development with a strong increase in early and late development.</text>
</comment>
<comment type="disruption phenotype">
    <text evidence="3">Cells show precocious development. Alterations are also noted at the slug stage and in spore formation. Slugs are longer and break apart several times on their way to culmination forming smaller but proportionate fruiting bodies. Spores from fruiting bodies are malformed and less viable, although the spore differentiation factors are synthesized and sensed normally. Mutant completes development 6 hours earlier.</text>
</comment>
<comment type="similarity">
    <text evidence="4">In the N-terminal section; belongs to the BMP lipoprotein family.</text>
</comment>
<comment type="similarity">
    <text evidence="4">In the C-terminal section; belongs to the G-protein coupled receptor 3 family. GABA-B receptor subfamily.</text>
</comment>
<protein>
    <recommendedName>
        <fullName>Metabotropic glutamate receptor-like protein J</fullName>
    </recommendedName>
</protein>
<sequence length="783" mass="87581">MKILLYIAIILSFFSLITISSECKIAVLLSGSPNDLGYNYLMNEARVKAESELKLDFSIYYENLEESMEEAEKAFQDALHKGANLIVVGSFVHVGLGLKYAALTKDQDIYWIIRGNKRPNPDLPHVVILNFNSFELHYLLGYFSGLMTKTGIVGFVAPGPDVNTISTDNSFYLGAKYARPNITFLNVYVQSWYNPNVSYSAAKMLIKNGADLIGMSQDDMSCQKAMMDSGLIGIGATGYPTHLLFGGNVGVSYITNWTNLYVKYAQHVLNDDWPDYSSYFTNLSREDSIFIDDYSYKVPIDIQNLVNDEIQRLKNTSYIPYRSDPYLAQLGIPFDSKGLLVEDQFRANKKLLKGDSISKVIDFGQYSIPIEFIDYPNSLKYGVTIVSGVCIFICLVCMTLVVVFKKARVIKSSSPAFLLLILLGCCIIFAACILFAQSPTNQTCSARIWLLSLGYTLFLGNLLVKNWRIWLLFDNPKLKKRAITNWKLYPWVFAILAIDVMILAIWQGLGNINAESRIGYDSLTQYQYKNVCSSDDQGSIALYLLLVFHGLVLLVACFISFKIKVVDIEEFNESKPITTSVYIITFCLFIVIPLMVSPQSLTSQTTIICVCAIVTTLISMLLLFGSKFYKMATQGLAINETFATSTKSSSKSSKSSYGKDNPNPNAINFGEDDTSDETSEEKHKSPKQKSVNFSNKSNSHLAVFTSDEETSKTSKLSIDFENSSKDISIDQLQQQKQQPINTNGDLENKSNDKIDDDNDNSSVLSKRISNQQNGETEIDSNNV</sequence>
<gene>
    <name type="primary">grlJ</name>
    <name type="ORF">DDB_G0272150</name>
</gene>
<evidence type="ECO:0000255" key="1"/>
<evidence type="ECO:0000256" key="2">
    <source>
        <dbReference type="SAM" id="MobiDB-lite"/>
    </source>
</evidence>
<evidence type="ECO:0000269" key="3">
    <source>
    </source>
</evidence>
<evidence type="ECO:0000305" key="4"/>
<reference key="1">
    <citation type="journal article" date="2002" name="Nature">
        <title>Sequence and analysis of chromosome 2 of Dictyostelium discoideum.</title>
        <authorList>
            <person name="Gloeckner G."/>
            <person name="Eichinger L."/>
            <person name="Szafranski K."/>
            <person name="Pachebat J.A."/>
            <person name="Bankier A.T."/>
            <person name="Dear P.H."/>
            <person name="Lehmann R."/>
            <person name="Baumgart C."/>
            <person name="Parra G."/>
            <person name="Abril J.F."/>
            <person name="Guigo R."/>
            <person name="Kumpf K."/>
            <person name="Tunggal B."/>
            <person name="Cox E.C."/>
            <person name="Quail M.A."/>
            <person name="Platzer M."/>
            <person name="Rosenthal A."/>
            <person name="Noegel A.A."/>
        </authorList>
    </citation>
    <scope>NUCLEOTIDE SEQUENCE [LARGE SCALE GENOMIC DNA]</scope>
    <source>
        <strain>AX4</strain>
    </source>
</reference>
<reference key="2">
    <citation type="journal article" date="2005" name="Nature">
        <title>The genome of the social amoeba Dictyostelium discoideum.</title>
        <authorList>
            <person name="Eichinger L."/>
            <person name="Pachebat J.A."/>
            <person name="Gloeckner G."/>
            <person name="Rajandream M.A."/>
            <person name="Sucgang R."/>
            <person name="Berriman M."/>
            <person name="Song J."/>
            <person name="Olsen R."/>
            <person name="Szafranski K."/>
            <person name="Xu Q."/>
            <person name="Tunggal B."/>
            <person name="Kummerfeld S."/>
            <person name="Madera M."/>
            <person name="Konfortov B.A."/>
            <person name="Rivero F."/>
            <person name="Bankier A.T."/>
            <person name="Lehmann R."/>
            <person name="Hamlin N."/>
            <person name="Davies R."/>
            <person name="Gaudet P."/>
            <person name="Fey P."/>
            <person name="Pilcher K."/>
            <person name="Chen G."/>
            <person name="Saunders D."/>
            <person name="Sodergren E.J."/>
            <person name="Davis P."/>
            <person name="Kerhornou A."/>
            <person name="Nie X."/>
            <person name="Hall N."/>
            <person name="Anjard C."/>
            <person name="Hemphill L."/>
            <person name="Bason N."/>
            <person name="Farbrother P."/>
            <person name="Desany B."/>
            <person name="Just E."/>
            <person name="Morio T."/>
            <person name="Rost R."/>
            <person name="Churcher C.M."/>
            <person name="Cooper J."/>
            <person name="Haydock S."/>
            <person name="van Driessche N."/>
            <person name="Cronin A."/>
            <person name="Goodhead I."/>
            <person name="Muzny D.M."/>
            <person name="Mourier T."/>
            <person name="Pain A."/>
            <person name="Lu M."/>
            <person name="Harper D."/>
            <person name="Lindsay R."/>
            <person name="Hauser H."/>
            <person name="James K.D."/>
            <person name="Quiles M."/>
            <person name="Madan Babu M."/>
            <person name="Saito T."/>
            <person name="Buchrieser C."/>
            <person name="Wardroper A."/>
            <person name="Felder M."/>
            <person name="Thangavelu M."/>
            <person name="Johnson D."/>
            <person name="Knights A."/>
            <person name="Loulseged H."/>
            <person name="Mungall K.L."/>
            <person name="Oliver K."/>
            <person name="Price C."/>
            <person name="Quail M.A."/>
            <person name="Urushihara H."/>
            <person name="Hernandez J."/>
            <person name="Rabbinowitsch E."/>
            <person name="Steffen D."/>
            <person name="Sanders M."/>
            <person name="Ma J."/>
            <person name="Kohara Y."/>
            <person name="Sharp S."/>
            <person name="Simmonds M.N."/>
            <person name="Spiegler S."/>
            <person name="Tivey A."/>
            <person name="Sugano S."/>
            <person name="White B."/>
            <person name="Walker D."/>
            <person name="Woodward J.R."/>
            <person name="Winckler T."/>
            <person name="Tanaka Y."/>
            <person name="Shaulsky G."/>
            <person name="Schleicher M."/>
            <person name="Weinstock G.M."/>
            <person name="Rosenthal A."/>
            <person name="Cox E.C."/>
            <person name="Chisholm R.L."/>
            <person name="Gibbs R.A."/>
            <person name="Loomis W.F."/>
            <person name="Platzer M."/>
            <person name="Kay R.R."/>
            <person name="Williams J.G."/>
            <person name="Dear P.H."/>
            <person name="Noegel A.A."/>
            <person name="Barrell B.G."/>
            <person name="Kuspa A."/>
        </authorList>
    </citation>
    <scope>NUCLEOTIDE SEQUENCE [LARGE SCALE GENOMIC DNA]</scope>
    <source>
        <strain>AX4</strain>
    </source>
</reference>
<reference key="3">
    <citation type="journal article" date="2006" name="Eur. J. Cell Biol.">
        <title>The Dictyostelium repertoire of seven transmembrane domain receptors.</title>
        <authorList>
            <person name="Prabhu Y."/>
            <person name="Eichinger L."/>
        </authorList>
    </citation>
    <scope>NOMENCLATURE</scope>
</reference>
<reference key="4">
    <citation type="journal article" date="2007" name="BMC Dev. Biol.">
        <title>GrlJ, a Dictyostelium GABAB-like receptor with roles in post-aggregation development.</title>
        <authorList>
            <person name="Prabhu Y."/>
            <person name="Mueller R."/>
            <person name="Anjard C."/>
            <person name="Noegel A.A."/>
        </authorList>
    </citation>
    <scope>DEVELOPMENTAL STAGE</scope>
    <scope>SUBCELLULAR LOCATION</scope>
    <scope>DISRUPTION PHENOTYPE</scope>
    <scope>FUNCTION</scope>
</reference>
<keyword id="KW-1003">Cell membrane</keyword>
<keyword id="KW-0175">Coiled coil</keyword>
<keyword id="KW-0256">Endoplasmic reticulum</keyword>
<keyword id="KW-0297">G-protein coupled receptor</keyword>
<keyword id="KW-0325">Glycoprotein</keyword>
<keyword id="KW-0333">Golgi apparatus</keyword>
<keyword id="KW-0472">Membrane</keyword>
<keyword id="KW-0539">Nucleus</keyword>
<keyword id="KW-0675">Receptor</keyword>
<keyword id="KW-1185">Reference proteome</keyword>
<keyword id="KW-0732">Signal</keyword>
<keyword id="KW-0807">Transducer</keyword>
<keyword id="KW-0812">Transmembrane</keyword>
<keyword id="KW-1133">Transmembrane helix</keyword>
<proteinExistence type="evidence at transcript level"/>
<name>GRLJ_DICDI</name>
<accession>Q75JT4</accession>
<accession>Q559S6</accession>